<proteinExistence type="inferred from homology"/>
<accession>B4S4H1</accession>
<dbReference type="EC" id="6.1.1.21" evidence="1"/>
<dbReference type="EMBL" id="CP001108">
    <property type="protein sequence ID" value="ACF45419.1"/>
    <property type="molecule type" value="Genomic_DNA"/>
</dbReference>
<dbReference type="RefSeq" id="WP_012504956.1">
    <property type="nucleotide sequence ID" value="NC_011059.1"/>
</dbReference>
<dbReference type="SMR" id="B4S4H1"/>
<dbReference type="STRING" id="290512.Paes_0362"/>
<dbReference type="KEGG" id="paa:Paes_0362"/>
<dbReference type="eggNOG" id="COG0124">
    <property type="taxonomic scope" value="Bacteria"/>
</dbReference>
<dbReference type="HOGENOM" id="CLU_025113_1_1_10"/>
<dbReference type="Proteomes" id="UP000002725">
    <property type="component" value="Chromosome"/>
</dbReference>
<dbReference type="GO" id="GO:0005737">
    <property type="term" value="C:cytoplasm"/>
    <property type="evidence" value="ECO:0007669"/>
    <property type="project" value="UniProtKB-SubCell"/>
</dbReference>
<dbReference type="GO" id="GO:0005524">
    <property type="term" value="F:ATP binding"/>
    <property type="evidence" value="ECO:0007669"/>
    <property type="project" value="UniProtKB-UniRule"/>
</dbReference>
<dbReference type="GO" id="GO:0004821">
    <property type="term" value="F:histidine-tRNA ligase activity"/>
    <property type="evidence" value="ECO:0007669"/>
    <property type="project" value="UniProtKB-UniRule"/>
</dbReference>
<dbReference type="GO" id="GO:0006427">
    <property type="term" value="P:histidyl-tRNA aminoacylation"/>
    <property type="evidence" value="ECO:0007669"/>
    <property type="project" value="UniProtKB-UniRule"/>
</dbReference>
<dbReference type="CDD" id="cd00773">
    <property type="entry name" value="HisRS-like_core"/>
    <property type="match status" value="1"/>
</dbReference>
<dbReference type="CDD" id="cd00859">
    <property type="entry name" value="HisRS_anticodon"/>
    <property type="match status" value="1"/>
</dbReference>
<dbReference type="Gene3D" id="3.40.50.800">
    <property type="entry name" value="Anticodon-binding domain"/>
    <property type="match status" value="1"/>
</dbReference>
<dbReference type="Gene3D" id="3.30.930.10">
    <property type="entry name" value="Bira Bifunctional Protein, Domain 2"/>
    <property type="match status" value="1"/>
</dbReference>
<dbReference type="HAMAP" id="MF_00127">
    <property type="entry name" value="His_tRNA_synth"/>
    <property type="match status" value="1"/>
</dbReference>
<dbReference type="InterPro" id="IPR006195">
    <property type="entry name" value="aa-tRNA-synth_II"/>
</dbReference>
<dbReference type="InterPro" id="IPR045864">
    <property type="entry name" value="aa-tRNA-synth_II/BPL/LPL"/>
</dbReference>
<dbReference type="InterPro" id="IPR004154">
    <property type="entry name" value="Anticodon-bd"/>
</dbReference>
<dbReference type="InterPro" id="IPR036621">
    <property type="entry name" value="Anticodon-bd_dom_sf"/>
</dbReference>
<dbReference type="InterPro" id="IPR015807">
    <property type="entry name" value="His-tRNA-ligase"/>
</dbReference>
<dbReference type="InterPro" id="IPR041715">
    <property type="entry name" value="HisRS-like_core"/>
</dbReference>
<dbReference type="InterPro" id="IPR004516">
    <property type="entry name" value="HisRS/HisZ"/>
</dbReference>
<dbReference type="InterPro" id="IPR033656">
    <property type="entry name" value="HisRS_anticodon"/>
</dbReference>
<dbReference type="NCBIfam" id="TIGR00442">
    <property type="entry name" value="hisS"/>
    <property type="match status" value="1"/>
</dbReference>
<dbReference type="PANTHER" id="PTHR43707:SF1">
    <property type="entry name" value="HISTIDINE--TRNA LIGASE, MITOCHONDRIAL-RELATED"/>
    <property type="match status" value="1"/>
</dbReference>
<dbReference type="PANTHER" id="PTHR43707">
    <property type="entry name" value="HISTIDYL-TRNA SYNTHETASE"/>
    <property type="match status" value="1"/>
</dbReference>
<dbReference type="Pfam" id="PF03129">
    <property type="entry name" value="HGTP_anticodon"/>
    <property type="match status" value="1"/>
</dbReference>
<dbReference type="Pfam" id="PF13393">
    <property type="entry name" value="tRNA-synt_His"/>
    <property type="match status" value="1"/>
</dbReference>
<dbReference type="PIRSF" id="PIRSF001549">
    <property type="entry name" value="His-tRNA_synth"/>
    <property type="match status" value="1"/>
</dbReference>
<dbReference type="SUPFAM" id="SSF52954">
    <property type="entry name" value="Class II aaRS ABD-related"/>
    <property type="match status" value="1"/>
</dbReference>
<dbReference type="SUPFAM" id="SSF55681">
    <property type="entry name" value="Class II aaRS and biotin synthetases"/>
    <property type="match status" value="1"/>
</dbReference>
<dbReference type="PROSITE" id="PS50862">
    <property type="entry name" value="AA_TRNA_LIGASE_II"/>
    <property type="match status" value="1"/>
</dbReference>
<protein>
    <recommendedName>
        <fullName evidence="1">Histidine--tRNA ligase</fullName>
        <ecNumber evidence="1">6.1.1.21</ecNumber>
    </recommendedName>
    <alternativeName>
        <fullName evidence="1">Histidyl-tRNA synthetase</fullName>
        <shortName evidence="1">HisRS</shortName>
    </alternativeName>
</protein>
<evidence type="ECO:0000255" key="1">
    <source>
        <dbReference type="HAMAP-Rule" id="MF_00127"/>
    </source>
</evidence>
<sequence length="422" mass="46544">MSHYRAVKGTRDIFPDEVAAWQYVESVIHRVASFYAFHEIRTPVFEYTDLFQRSIGATTDIVGKEMFTFQPDPNGRSITLRPEMTAGVMRAFLQGNRASESPVHKLYYISNLFRKERPQAGRQRQFCQFGAELLGASSPAAVAEVIAMMMHVFRLLGLKGLKLRINTLGSIEDRKRYRDALREYLLPFSGELDAASLERLEKNPLRILDSKNPAVQSIVSGAPSLRDYLQPAAVEEFEEVLGYLDDRGIEYVQDPLLVRGLDYYCHTAFEVQCSDLGAQDALGGGGRYDGLARELGAGADLPAVGFAVGMERLMIALERQGLLSTIPPKGPDVYVVLQDRAFLVHAVALCGALRDAAISTEIDLAGRSMKAQMREANRIKAAYALFVGPDEVASGVYGLKNLESSSQESRSLEAVIAELGHG</sequence>
<name>SYH_PROA2</name>
<reference key="1">
    <citation type="submission" date="2008-06" db="EMBL/GenBank/DDBJ databases">
        <title>Complete sequence of chromosome of Prosthecochloris aestuarii DSM 271.</title>
        <authorList>
            <consortium name="US DOE Joint Genome Institute"/>
            <person name="Lucas S."/>
            <person name="Copeland A."/>
            <person name="Lapidus A."/>
            <person name="Glavina del Rio T."/>
            <person name="Dalin E."/>
            <person name="Tice H."/>
            <person name="Bruce D."/>
            <person name="Goodwin L."/>
            <person name="Pitluck S."/>
            <person name="Schmutz J."/>
            <person name="Larimer F."/>
            <person name="Land M."/>
            <person name="Hauser L."/>
            <person name="Kyrpides N."/>
            <person name="Anderson I."/>
            <person name="Liu Z."/>
            <person name="Li T."/>
            <person name="Zhao F."/>
            <person name="Overmann J."/>
            <person name="Bryant D.A."/>
            <person name="Richardson P."/>
        </authorList>
    </citation>
    <scope>NUCLEOTIDE SEQUENCE [LARGE SCALE GENOMIC DNA]</scope>
    <source>
        <strain>DSM 271 / SK 413</strain>
    </source>
</reference>
<organism>
    <name type="scientific">Prosthecochloris aestuarii (strain DSM 271 / SK 413)</name>
    <dbReference type="NCBI Taxonomy" id="290512"/>
    <lineage>
        <taxon>Bacteria</taxon>
        <taxon>Pseudomonadati</taxon>
        <taxon>Chlorobiota</taxon>
        <taxon>Chlorobiia</taxon>
        <taxon>Chlorobiales</taxon>
        <taxon>Chlorobiaceae</taxon>
        <taxon>Prosthecochloris</taxon>
    </lineage>
</organism>
<comment type="catalytic activity">
    <reaction evidence="1">
        <text>tRNA(His) + L-histidine + ATP = L-histidyl-tRNA(His) + AMP + diphosphate + H(+)</text>
        <dbReference type="Rhea" id="RHEA:17313"/>
        <dbReference type="Rhea" id="RHEA-COMP:9665"/>
        <dbReference type="Rhea" id="RHEA-COMP:9689"/>
        <dbReference type="ChEBI" id="CHEBI:15378"/>
        <dbReference type="ChEBI" id="CHEBI:30616"/>
        <dbReference type="ChEBI" id="CHEBI:33019"/>
        <dbReference type="ChEBI" id="CHEBI:57595"/>
        <dbReference type="ChEBI" id="CHEBI:78442"/>
        <dbReference type="ChEBI" id="CHEBI:78527"/>
        <dbReference type="ChEBI" id="CHEBI:456215"/>
        <dbReference type="EC" id="6.1.1.21"/>
    </reaction>
</comment>
<comment type="subunit">
    <text evidence="1">Homodimer.</text>
</comment>
<comment type="subcellular location">
    <subcellularLocation>
        <location evidence="1">Cytoplasm</location>
    </subcellularLocation>
</comment>
<comment type="similarity">
    <text evidence="1">Belongs to the class-II aminoacyl-tRNA synthetase family.</text>
</comment>
<keyword id="KW-0030">Aminoacyl-tRNA synthetase</keyword>
<keyword id="KW-0067">ATP-binding</keyword>
<keyword id="KW-0963">Cytoplasm</keyword>
<keyword id="KW-0436">Ligase</keyword>
<keyword id="KW-0547">Nucleotide-binding</keyword>
<keyword id="KW-0648">Protein biosynthesis</keyword>
<gene>
    <name evidence="1" type="primary">hisS</name>
    <name type="ordered locus">Paes_0362</name>
</gene>
<feature type="chain" id="PRO_1000095578" description="Histidine--tRNA ligase">
    <location>
        <begin position="1"/>
        <end position="422"/>
    </location>
</feature>